<organism>
    <name type="scientific">Nostoc sp. (strain PCC 7120 / SAG 25.82 / UTEX 2576)</name>
    <dbReference type="NCBI Taxonomy" id="103690"/>
    <lineage>
        <taxon>Bacteria</taxon>
        <taxon>Bacillati</taxon>
        <taxon>Cyanobacteriota</taxon>
        <taxon>Cyanophyceae</taxon>
        <taxon>Nostocales</taxon>
        <taxon>Nostocaceae</taxon>
        <taxon>Nostoc</taxon>
    </lineage>
</organism>
<proteinExistence type="predicted"/>
<keyword id="KW-1185">Reference proteome</keyword>
<keyword id="KW-0677">Repeat</keyword>
<keyword id="KW-0853">WD repeat</keyword>
<feature type="chain" id="PRO_0000051515" description="Uncharacterized WD repeat-containing protein alr3466">
    <location>
        <begin position="1"/>
        <end position="1526"/>
    </location>
</feature>
<feature type="repeat" description="WD 1">
    <location>
        <begin position="334"/>
        <end position="376"/>
    </location>
</feature>
<feature type="domain" description="Pentapeptide repeat">
    <location>
        <begin position="823"/>
        <end position="862"/>
    </location>
</feature>
<feature type="repeat" description="WD 2">
    <location>
        <begin position="862"/>
        <end position="901"/>
    </location>
</feature>
<feature type="repeat" description="WD 3">
    <location>
        <begin position="904"/>
        <end position="945"/>
    </location>
</feature>
<feature type="repeat" description="WD 4">
    <location>
        <begin position="946"/>
        <end position="985"/>
    </location>
</feature>
<feature type="repeat" description="WD 5">
    <location>
        <begin position="988"/>
        <end position="1027"/>
    </location>
</feature>
<feature type="repeat" description="WD 6">
    <location>
        <begin position="1030"/>
        <end position="1069"/>
    </location>
</feature>
<feature type="repeat" description="WD 7">
    <location>
        <begin position="1072"/>
        <end position="1111"/>
    </location>
</feature>
<feature type="repeat" description="WD 8">
    <location>
        <begin position="1114"/>
        <end position="1153"/>
    </location>
</feature>
<feature type="repeat" description="WD 9">
    <location>
        <begin position="1156"/>
        <end position="1195"/>
    </location>
</feature>
<feature type="repeat" description="WD 10">
    <location>
        <begin position="1198"/>
        <end position="1237"/>
    </location>
</feature>
<feature type="repeat" description="WD 11">
    <location>
        <begin position="1240"/>
        <end position="1279"/>
    </location>
</feature>
<feature type="repeat" description="WD 12">
    <location>
        <begin position="1282"/>
        <end position="1321"/>
    </location>
</feature>
<feature type="repeat" description="WD 13">
    <location>
        <begin position="1324"/>
        <end position="1363"/>
    </location>
</feature>
<feature type="repeat" description="WD 14">
    <location>
        <begin position="1366"/>
        <end position="1405"/>
    </location>
</feature>
<feature type="repeat" description="WD 15">
    <location>
        <begin position="1408"/>
        <end position="1447"/>
    </location>
</feature>
<feature type="repeat" description="WD 16">
    <location>
        <begin position="1450"/>
        <end position="1491"/>
    </location>
</feature>
<reference key="1">
    <citation type="journal article" date="2001" name="DNA Res.">
        <title>Complete genomic sequence of the filamentous nitrogen-fixing cyanobacterium Anabaena sp. strain PCC 7120.</title>
        <authorList>
            <person name="Kaneko T."/>
            <person name="Nakamura Y."/>
            <person name="Wolk C.P."/>
            <person name="Kuritz T."/>
            <person name="Sasamoto S."/>
            <person name="Watanabe A."/>
            <person name="Iriguchi M."/>
            <person name="Ishikawa A."/>
            <person name="Kawashima K."/>
            <person name="Kimura T."/>
            <person name="Kishida Y."/>
            <person name="Kohara M."/>
            <person name="Matsumoto M."/>
            <person name="Matsuno A."/>
            <person name="Muraki A."/>
            <person name="Nakazaki N."/>
            <person name="Shimpo S."/>
            <person name="Sugimoto M."/>
            <person name="Takazawa M."/>
            <person name="Yamada M."/>
            <person name="Yasuda M."/>
            <person name="Tabata S."/>
        </authorList>
    </citation>
    <scope>NUCLEOTIDE SEQUENCE [LARGE SCALE GENOMIC DNA]</scope>
    <source>
        <strain>PCC 7120 / SAG 25.82 / UTEX 2576</strain>
    </source>
</reference>
<sequence length="1526" mass="170377">MMSLINLDLVISAVTSIANPVIKEKILRSETVIKLLQQFNLDPEHPPADFSGVYAYTLVEYGVGKPKAFLELFRQEAIKQAFRKALDHNNPSILLSEVDTFLDACTLGDEIRSLELDVRREVAAFATVFIEVAKRSRTPADVLMNQQIGSLHKRIAGIQEQLERLPTLEGIRTEIARLAAQNYPALTPTATENQCRAIALAQQMRGWFETLGYRLEKYEIWAEEYFEWIINVPVRRSYDRILVRGVAGEVRLSDVMALCQSVNQQKTDEGWLVSTRRISRAARDEVKKEENRHLDCFTFDELIDLDADFSGYLDWLEAEIKRRKIDQKYVPLACTKEEIDPVTKRRIGISRYEAEDGWIDGYIDLWLDDPAKEHISILGEFGTGKTWFVFHYAWTALQRYKDAQRRGVERPRLPLVITLRDFAKALNVENVLAGFFFTQHNIRLNSEVFDQLNRMGKLLLIFDGFDEMAAKVDRQQMINNFWELAKVVVPGSKVILTCRTEHFPEAKEGRALLNAELQASTNKLTGETPQFEVLELEKFNDEQIRQVLLYQAEEATVEQIMGNSQLLDLARRPVMTDLILEALPDIEAGKPIDMSRVYLYAVRHKMERDIKAERTFNSLADKLYFLCELSWEMLSTDQMSLNYRLFPERIRRLFGSVVQEEKDLDHWHYDMMAQTMLVRNADGDYTPAHRSLLEFFVAYKFAAELGALARDFTEVGQAQSGLDSSTASIDYTWSGYFSRQLDSTGCREVIAPLRQFKSEFLDKLRETFGKAKLTKAVIDLLLPMLDDNEPLIKIIEATRGRTEDEVNYVGGNAATLLVKLNKMVLEGRDLSHTVIIGADFTNTSLRCVNFTEANLAYSVFTKILGSVLTVAFSPDGKLFATGDSGGIVRFWEAATGKELLTCKGHNSWVNSVGFSQDGKMLASGSDDQTVRLWDISSGQCLKTFKGHTSRVRSVVFSPNSLMLASGSSDQTVRLWDISSGECLYIFQGHTGWVYSVAFNLDGSMLATGSGDQTVRLWDISSSQCFYIFQGHTSCVRSVVFSSDGAMLASGSDDQTVRLWDISSGNCLYTLQGHTSCVRSVVFSPDGAMLASGGDDQIVRLWDISSGNCLYTLQGYTSWVRFLVFSPNGVTLANGSSDQIVRLWDISSKKCLYTLQGHTNWVNAVAFSPDGATLASGSGDQTVRLWDISSSKCLYILQGHTSWVNSVVFNPDGSTLASGSSDQTVRLWEINSSKCLCTFQGHTSWVNSVVFNPDGSMLASGSSDKTVRLWDISSSKCLHTFQGHTNWVNSVAFNPDGSMLASGSGDQTVRLWEISSSKCLHTFQGHTSWVSSVTFSPDGTMLASGSDDQTVRLWSISSGECLYTFLGHTNWVGSVIFSPDGAILASGSGDQTVRLWSISSGKCLYTLQGHNNWVGSIVFSPDGTLLASGSDDQTVRLWNISSGECLYTLHGHINSVRSVAFSSDGLILASGSDDETIKLWDVKTGECIKTLKSEKIYEGMNITSVRGLTEVEKATLKTLGAVENREI</sequence>
<gene>
    <name type="ordered locus">alr3466</name>
</gene>
<dbReference type="EMBL" id="BA000019">
    <property type="protein sequence ID" value="BAB75165.1"/>
    <property type="molecule type" value="Genomic_DNA"/>
</dbReference>
<dbReference type="PIR" id="AC2239">
    <property type="entry name" value="AC2239"/>
</dbReference>
<dbReference type="SMR" id="Q8YRI1"/>
<dbReference type="STRING" id="103690.gene:10495505"/>
<dbReference type="KEGG" id="ana:alr3466"/>
<dbReference type="eggNOG" id="COG2319">
    <property type="taxonomic scope" value="Bacteria"/>
</dbReference>
<dbReference type="eggNOG" id="COG5635">
    <property type="taxonomic scope" value="Bacteria"/>
</dbReference>
<dbReference type="OrthoDB" id="567898at2"/>
<dbReference type="Proteomes" id="UP000002483">
    <property type="component" value="Chromosome"/>
</dbReference>
<dbReference type="CDD" id="cd00200">
    <property type="entry name" value="WD40"/>
    <property type="match status" value="2"/>
</dbReference>
<dbReference type="FunFam" id="2.130.10.10:FF:000228">
    <property type="entry name" value="COMPASS-like H3K4 histone methylase component WDR5A"/>
    <property type="match status" value="1"/>
</dbReference>
<dbReference type="Gene3D" id="3.40.50.300">
    <property type="entry name" value="P-loop containing nucleotide triphosphate hydrolases"/>
    <property type="match status" value="1"/>
</dbReference>
<dbReference type="Gene3D" id="2.130.10.10">
    <property type="entry name" value="YVTN repeat-like/Quinoprotein amine dehydrogenase"/>
    <property type="match status" value="8"/>
</dbReference>
<dbReference type="InterPro" id="IPR001646">
    <property type="entry name" value="5peptide_repeat"/>
</dbReference>
<dbReference type="InterPro" id="IPR020472">
    <property type="entry name" value="G-protein_beta_WD-40_rep"/>
</dbReference>
<dbReference type="InterPro" id="IPR054557">
    <property type="entry name" value="NA-iREase1_dom"/>
</dbReference>
<dbReference type="InterPro" id="IPR007111">
    <property type="entry name" value="NACHT_NTPase"/>
</dbReference>
<dbReference type="InterPro" id="IPR054610">
    <property type="entry name" value="NNH"/>
</dbReference>
<dbReference type="InterPro" id="IPR027417">
    <property type="entry name" value="P-loop_NTPase"/>
</dbReference>
<dbReference type="InterPro" id="IPR011047">
    <property type="entry name" value="Quinoprotein_ADH-like_sf"/>
</dbReference>
<dbReference type="InterPro" id="IPR015943">
    <property type="entry name" value="WD40/YVTN_repeat-like_dom_sf"/>
</dbReference>
<dbReference type="InterPro" id="IPR019775">
    <property type="entry name" value="WD40_repeat_CS"/>
</dbReference>
<dbReference type="InterPro" id="IPR036322">
    <property type="entry name" value="WD40_repeat_dom_sf"/>
</dbReference>
<dbReference type="InterPro" id="IPR001680">
    <property type="entry name" value="WD40_rpt"/>
</dbReference>
<dbReference type="PANTHER" id="PTHR22847:SF637">
    <property type="entry name" value="WD REPEAT DOMAIN 5B"/>
    <property type="match status" value="1"/>
</dbReference>
<dbReference type="PANTHER" id="PTHR22847">
    <property type="entry name" value="WD40 REPEAT PROTEIN"/>
    <property type="match status" value="1"/>
</dbReference>
<dbReference type="Pfam" id="PF25173">
    <property type="entry name" value="Beta-prop_WDR3_1st"/>
    <property type="match status" value="1"/>
</dbReference>
<dbReference type="Pfam" id="PF22722">
    <property type="entry name" value="NA-iREase1"/>
    <property type="match status" value="1"/>
</dbReference>
<dbReference type="Pfam" id="PF05729">
    <property type="entry name" value="NACHT"/>
    <property type="match status" value="1"/>
</dbReference>
<dbReference type="Pfam" id="PF22736">
    <property type="entry name" value="NNH5"/>
    <property type="match status" value="1"/>
</dbReference>
<dbReference type="Pfam" id="PF00805">
    <property type="entry name" value="Pentapeptide"/>
    <property type="match status" value="1"/>
</dbReference>
<dbReference type="Pfam" id="PF00400">
    <property type="entry name" value="WD40"/>
    <property type="match status" value="11"/>
</dbReference>
<dbReference type="PRINTS" id="PR00320">
    <property type="entry name" value="GPROTEINBRPT"/>
</dbReference>
<dbReference type="SMART" id="SM00320">
    <property type="entry name" value="WD40"/>
    <property type="match status" value="15"/>
</dbReference>
<dbReference type="SUPFAM" id="SSF52540">
    <property type="entry name" value="P-loop containing nucleoside triphosphate hydrolases"/>
    <property type="match status" value="1"/>
</dbReference>
<dbReference type="SUPFAM" id="SSF141571">
    <property type="entry name" value="Pentapeptide repeat-like"/>
    <property type="match status" value="1"/>
</dbReference>
<dbReference type="SUPFAM" id="SSF50998">
    <property type="entry name" value="Quinoprotein alcohol dehydrogenase-like"/>
    <property type="match status" value="1"/>
</dbReference>
<dbReference type="SUPFAM" id="SSF50978">
    <property type="entry name" value="WD40 repeat-like"/>
    <property type="match status" value="2"/>
</dbReference>
<dbReference type="PROSITE" id="PS50837">
    <property type="entry name" value="NACHT"/>
    <property type="match status" value="1"/>
</dbReference>
<dbReference type="PROSITE" id="PS00678">
    <property type="entry name" value="WD_REPEATS_1"/>
    <property type="match status" value="11"/>
</dbReference>
<dbReference type="PROSITE" id="PS50082">
    <property type="entry name" value="WD_REPEATS_2"/>
    <property type="match status" value="15"/>
</dbReference>
<dbReference type="PROSITE" id="PS50294">
    <property type="entry name" value="WD_REPEATS_REGION"/>
    <property type="match status" value="1"/>
</dbReference>
<name>YY46_NOSS1</name>
<accession>Q8YRI1</accession>
<protein>
    <recommendedName>
        <fullName>Uncharacterized WD repeat-containing protein alr3466</fullName>
    </recommendedName>
</protein>